<comment type="function">
    <text evidence="1">Hormone found in the sinus gland of isopods and decapods which controls the blood sugar level. Has a secretagogue action over the amylase released from the midgut gland. May act as a stress hormone and may be involved in the control of molting and reproduction (By similarity).</text>
</comment>
<comment type="subcellular location">
    <subcellularLocation>
        <location>Secreted</location>
    </subcellularLocation>
</comment>
<comment type="similarity">
    <text evidence="3">Belongs to the arthropod CHH/MIH/GIH/VIH hormone family.</text>
</comment>
<sequence>MVALNTLSAVSAALLVLAASPSPASARSLDASPSSAFSGNHSLSKRSLFDPACTGIYDRQLLGKLGRLCDDCYNVFREPKVATGCRSNCYYNLIFLDCLEYLIPSHLQEEHMEALQTVGK</sequence>
<gene>
    <name type="primary">CHH4</name>
</gene>
<name>CHH4_PENMO</name>
<evidence type="ECO:0000250" key="1"/>
<evidence type="ECO:0000255" key="2"/>
<evidence type="ECO:0000305" key="3"/>
<proteinExistence type="evidence at transcript level"/>
<organism>
    <name type="scientific">Penaeus monodon</name>
    <name type="common">Giant tiger prawn</name>
    <dbReference type="NCBI Taxonomy" id="6687"/>
    <lineage>
        <taxon>Eukaryota</taxon>
        <taxon>Metazoa</taxon>
        <taxon>Ecdysozoa</taxon>
        <taxon>Arthropoda</taxon>
        <taxon>Crustacea</taxon>
        <taxon>Multicrustacea</taxon>
        <taxon>Malacostraca</taxon>
        <taxon>Eumalacostraca</taxon>
        <taxon>Eucarida</taxon>
        <taxon>Decapoda</taxon>
        <taxon>Dendrobranchiata</taxon>
        <taxon>Penaeoidea</taxon>
        <taxon>Penaeidae</taxon>
        <taxon>Penaeus</taxon>
    </lineage>
</organism>
<dbReference type="EMBL" id="AF104389">
    <property type="protein sequence ID" value="AAC84145.1"/>
    <property type="molecule type" value="mRNA"/>
</dbReference>
<dbReference type="SMR" id="O97386"/>
<dbReference type="EnsemblMetazoa" id="XM_037936441.1">
    <property type="protein sequence ID" value="XP_037792369.1"/>
    <property type="gene ID" value="LOC119587755"/>
</dbReference>
<dbReference type="OrthoDB" id="6365952at2759"/>
<dbReference type="GO" id="GO:0005576">
    <property type="term" value="C:extracellular region"/>
    <property type="evidence" value="ECO:0007669"/>
    <property type="project" value="UniProtKB-SubCell"/>
</dbReference>
<dbReference type="GO" id="GO:0005184">
    <property type="term" value="F:neuropeptide hormone activity"/>
    <property type="evidence" value="ECO:0007669"/>
    <property type="project" value="InterPro"/>
</dbReference>
<dbReference type="GO" id="GO:0007623">
    <property type="term" value="P:circadian rhythm"/>
    <property type="evidence" value="ECO:0007669"/>
    <property type="project" value="TreeGrafter"/>
</dbReference>
<dbReference type="GO" id="GO:0006006">
    <property type="term" value="P:glucose metabolic process"/>
    <property type="evidence" value="ECO:0007669"/>
    <property type="project" value="UniProtKB-KW"/>
</dbReference>
<dbReference type="GO" id="GO:0007218">
    <property type="term" value="P:neuropeptide signaling pathway"/>
    <property type="evidence" value="ECO:0007669"/>
    <property type="project" value="UniProtKB-KW"/>
</dbReference>
<dbReference type="Gene3D" id="1.10.2010.10">
    <property type="entry name" value="Crustacean CHH/MIH/GIH neurohormone"/>
    <property type="match status" value="1"/>
</dbReference>
<dbReference type="InterPro" id="IPR018251">
    <property type="entry name" value="Crust_neurhormone_CS"/>
</dbReference>
<dbReference type="InterPro" id="IPR031098">
    <property type="entry name" value="Crust_neurohorm"/>
</dbReference>
<dbReference type="InterPro" id="IPR035957">
    <property type="entry name" value="Crust_neurohorm_sf"/>
</dbReference>
<dbReference type="InterPro" id="IPR001166">
    <property type="entry name" value="Hyperglycemic"/>
</dbReference>
<dbReference type="InterPro" id="IPR000346">
    <property type="entry name" value="Hyperglycemic1"/>
</dbReference>
<dbReference type="PANTHER" id="PTHR35981">
    <property type="entry name" value="ION TRANSPORT PEPTIDE, ISOFORM C"/>
    <property type="match status" value="1"/>
</dbReference>
<dbReference type="PANTHER" id="PTHR35981:SF2">
    <property type="entry name" value="ION TRANSPORT PEPTIDE, ISOFORM C"/>
    <property type="match status" value="1"/>
</dbReference>
<dbReference type="Pfam" id="PF01147">
    <property type="entry name" value="Crust_neurohorm"/>
    <property type="match status" value="1"/>
</dbReference>
<dbReference type="PRINTS" id="PR00548">
    <property type="entry name" value="HYPRGLYCEMC1"/>
</dbReference>
<dbReference type="PRINTS" id="PR00550">
    <property type="entry name" value="HYPRGLYCEMIC"/>
</dbReference>
<dbReference type="SUPFAM" id="SSF81778">
    <property type="entry name" value="Crustacean CHH/MIH/GIH neurohormone"/>
    <property type="match status" value="1"/>
</dbReference>
<dbReference type="PROSITE" id="PS01250">
    <property type="entry name" value="CHH_MIH_GIH"/>
    <property type="match status" value="1"/>
</dbReference>
<reference key="1">
    <citation type="journal article" date="2000" name="Mar. Biotechnol.">
        <title>Five crustacean hyperglycemic family hormones of Penaeus monodon: complementary DNA sequence and identification in single sinus glands by electrospray ionization-Fourier transform mass spectrometry.</title>
        <authorList>
            <person name="Davey M.L."/>
            <person name="Hall M.R."/>
            <person name="Willis R.H."/>
            <person name="Oliver R.W.A."/>
            <person name="Thurn M.J."/>
            <person name="Wilson K.J."/>
        </authorList>
    </citation>
    <scope>NUCLEOTIDE SEQUENCE [MRNA]</scope>
    <source>
        <tissue>Eyestalk</tissue>
    </source>
</reference>
<accession>O97386</accession>
<protein>
    <recommendedName>
        <fullName>Crustacean hyperglycemic hormones 4</fullName>
    </recommendedName>
    <alternativeName>
        <fullName>Pm-SGP-IV</fullName>
    </alternativeName>
    <component>
        <recommendedName>
            <fullName>CHH precursor-related peptide 4</fullName>
            <shortName>CPRP 4</shortName>
        </recommendedName>
    </component>
    <component>
        <recommendedName>
            <fullName>Crustacean hyperglycemic hormone 4</fullName>
            <shortName>CHH 4</shortName>
        </recommendedName>
    </component>
</protein>
<feature type="signal peptide" evidence="2">
    <location>
        <begin position="1"/>
        <end position="26"/>
    </location>
</feature>
<feature type="peptide" id="PRO_0000019067" description="CHH precursor-related peptide 4">
    <location>
        <begin position="27"/>
        <end position="44"/>
    </location>
</feature>
<feature type="peptide" id="PRO_0000019068" description="Crustacean hyperglycemic hormone 4">
    <location>
        <begin position="47"/>
        <end position="118"/>
    </location>
</feature>
<feature type="modified residue" description="Valine amide" evidence="1">
    <location>
        <position position="118"/>
    </location>
</feature>
<feature type="disulfide bond" evidence="1">
    <location>
        <begin position="53"/>
        <end position="89"/>
    </location>
</feature>
<feature type="disulfide bond" evidence="1">
    <location>
        <begin position="69"/>
        <end position="85"/>
    </location>
</feature>
<feature type="disulfide bond" evidence="1">
    <location>
        <begin position="72"/>
        <end position="98"/>
    </location>
</feature>
<keyword id="KW-0027">Amidation</keyword>
<keyword id="KW-0119">Carbohydrate metabolism</keyword>
<keyword id="KW-0165">Cleavage on pair of basic residues</keyword>
<keyword id="KW-1015">Disulfide bond</keyword>
<keyword id="KW-0313">Glucose metabolism</keyword>
<keyword id="KW-0372">Hormone</keyword>
<keyword id="KW-0527">Neuropeptide</keyword>
<keyword id="KW-0964">Secreted</keyword>
<keyword id="KW-0732">Signal</keyword>